<dbReference type="EMBL" id="AE014296">
    <property type="protein sequence ID" value="AAF49038.2"/>
    <property type="molecule type" value="Genomic_DNA"/>
</dbReference>
<dbReference type="EMBL" id="BT100319">
    <property type="protein sequence ID" value="ACZ54681.1"/>
    <property type="status" value="ALT_INIT"/>
    <property type="molecule type" value="mRNA"/>
</dbReference>
<dbReference type="RefSeq" id="NP_730508.1">
    <property type="nucleotide sequence ID" value="NM_168841.2"/>
</dbReference>
<dbReference type="SMR" id="Q9VWB0"/>
<dbReference type="BioGRID" id="65492">
    <property type="interactions" value="4"/>
</dbReference>
<dbReference type="FunCoup" id="Q9VWB0">
    <property type="interactions" value="947"/>
</dbReference>
<dbReference type="IntAct" id="Q9VWB0">
    <property type="interactions" value="4"/>
</dbReference>
<dbReference type="STRING" id="7227.FBpp0074615"/>
<dbReference type="GlyGen" id="Q9VWB0">
    <property type="glycosylation" value="2 sites"/>
</dbReference>
<dbReference type="PaxDb" id="7227-FBpp0074615"/>
<dbReference type="DNASU" id="40229"/>
<dbReference type="EnsemblMetazoa" id="FBtr0074846">
    <property type="protein sequence ID" value="FBpp0074615"/>
    <property type="gene ID" value="FBgn0288469"/>
</dbReference>
<dbReference type="GeneID" id="40229"/>
<dbReference type="KEGG" id="dme:Dmel_CG32226"/>
<dbReference type="UCSC" id="CG32226-RA">
    <property type="organism name" value="d. melanogaster"/>
</dbReference>
<dbReference type="AGR" id="FB:FBgn0288469"/>
<dbReference type="CTD" id="40229"/>
<dbReference type="FlyBase" id="FBgn0288469">
    <property type="gene designation" value="Pex23"/>
</dbReference>
<dbReference type="VEuPathDB" id="VectorBase:FBgn0288469"/>
<dbReference type="eggNOG" id="KOG3587">
    <property type="taxonomic scope" value="Eukaryota"/>
</dbReference>
<dbReference type="eggNOG" id="KOG3669">
    <property type="taxonomic scope" value="Eukaryota"/>
</dbReference>
<dbReference type="GeneTree" id="ENSGT00510000047886"/>
<dbReference type="HOGENOM" id="CLU_008303_0_0_1"/>
<dbReference type="InParanoid" id="Q9VWB0"/>
<dbReference type="OMA" id="CPMQISR"/>
<dbReference type="OrthoDB" id="72441at2759"/>
<dbReference type="PhylomeDB" id="Q9VWB0"/>
<dbReference type="BioGRID-ORCS" id="40229">
    <property type="hits" value="0 hits in 1 CRISPR screen"/>
</dbReference>
<dbReference type="GenomeRNAi" id="40229"/>
<dbReference type="PRO" id="PR:Q9VWB0"/>
<dbReference type="Proteomes" id="UP000000803">
    <property type="component" value="Chromosome 3L"/>
</dbReference>
<dbReference type="Bgee" id="FBgn0052226">
    <property type="expression patterns" value="Expressed in second segment of antenna (Drosophila) and 58 other cell types or tissues"/>
</dbReference>
<dbReference type="GO" id="GO:0098588">
    <property type="term" value="C:bounding membrane of organelle"/>
    <property type="evidence" value="ECO:0007669"/>
    <property type="project" value="UniProtKB-ARBA"/>
</dbReference>
<dbReference type="GO" id="GO:0005737">
    <property type="term" value="C:cytoplasm"/>
    <property type="evidence" value="ECO:0007669"/>
    <property type="project" value="UniProtKB-ARBA"/>
</dbReference>
<dbReference type="GO" id="GO:0043231">
    <property type="term" value="C:intracellular membrane-bounded organelle"/>
    <property type="evidence" value="ECO:0007669"/>
    <property type="project" value="UniProtKB-ARBA"/>
</dbReference>
<dbReference type="GO" id="GO:0030246">
    <property type="term" value="F:carbohydrate binding"/>
    <property type="evidence" value="ECO:0007669"/>
    <property type="project" value="UniProtKB-KW"/>
</dbReference>
<dbReference type="GO" id="GO:0007031">
    <property type="term" value="P:peroxisome organization"/>
    <property type="evidence" value="ECO:0007669"/>
    <property type="project" value="UniProtKB-KW"/>
</dbReference>
<dbReference type="CDD" id="cd00070">
    <property type="entry name" value="GLECT"/>
    <property type="match status" value="1"/>
</dbReference>
<dbReference type="FunFam" id="2.60.120.200:FF:000287">
    <property type="entry name" value="tectonin beta-propeller repeat-containing protein"/>
    <property type="match status" value="1"/>
</dbReference>
<dbReference type="Gene3D" id="2.60.120.200">
    <property type="match status" value="1"/>
</dbReference>
<dbReference type="InterPro" id="IPR006624">
    <property type="entry name" value="Beta-propeller_rpt_TECPR"/>
</dbReference>
<dbReference type="InterPro" id="IPR013320">
    <property type="entry name" value="ConA-like_dom_sf"/>
</dbReference>
<dbReference type="InterPro" id="IPR001079">
    <property type="entry name" value="Galectin_CRD"/>
</dbReference>
<dbReference type="InterPro" id="IPR006614">
    <property type="entry name" value="Peroxin/Ferlin"/>
</dbReference>
<dbReference type="InterPro" id="IPR010482">
    <property type="entry name" value="TECPR1-like_DysF"/>
</dbReference>
<dbReference type="InterPro" id="IPR051513">
    <property type="entry name" value="Tectonin_beta-propeller"/>
</dbReference>
<dbReference type="PANTHER" id="PTHR23250">
    <property type="entry name" value="DYSFERLIN-RELATED"/>
    <property type="match status" value="1"/>
</dbReference>
<dbReference type="PANTHER" id="PTHR23250:SF1">
    <property type="entry name" value="TECTONIN BETA-PROPELLER REPEAT-CONTAINING PROTEIN 1"/>
    <property type="match status" value="1"/>
</dbReference>
<dbReference type="Pfam" id="PF00337">
    <property type="entry name" value="Gal-bind_lectin"/>
    <property type="match status" value="1"/>
</dbReference>
<dbReference type="Pfam" id="PF06462">
    <property type="entry name" value="Hyd_WA"/>
    <property type="match status" value="6"/>
</dbReference>
<dbReference type="Pfam" id="PF06398">
    <property type="entry name" value="Pex24p"/>
    <property type="match status" value="1"/>
</dbReference>
<dbReference type="Pfam" id="PF19193">
    <property type="entry name" value="Tectonin"/>
    <property type="match status" value="1"/>
</dbReference>
<dbReference type="SMART" id="SM00694">
    <property type="entry name" value="DysFC"/>
    <property type="match status" value="2"/>
</dbReference>
<dbReference type="SMART" id="SM00693">
    <property type="entry name" value="DysFN"/>
    <property type="match status" value="2"/>
</dbReference>
<dbReference type="SMART" id="SM00908">
    <property type="entry name" value="Gal-bind_lectin"/>
    <property type="match status" value="1"/>
</dbReference>
<dbReference type="SMART" id="SM00276">
    <property type="entry name" value="GLECT"/>
    <property type="match status" value="1"/>
</dbReference>
<dbReference type="SMART" id="SM00706">
    <property type="entry name" value="TECPR"/>
    <property type="match status" value="8"/>
</dbReference>
<dbReference type="SUPFAM" id="SSF49899">
    <property type="entry name" value="Concanavalin A-like lectins/glucanases"/>
    <property type="match status" value="1"/>
</dbReference>
<dbReference type="PROSITE" id="PS51304">
    <property type="entry name" value="GALECTIN"/>
    <property type="match status" value="1"/>
</dbReference>
<sequence length="1350" mass="149486">MPSFYLFAASSEGRVYTLSTNSGAWRELPYLGLEFKKICAVPNFLWAIGGDRQVYVHVHGLDVPIRIREESYENERWLPIEGFSKTLLPTDRYRYSSADGSVERGVDKIRLPSMAWQWDGDWHLDLELDGQPLTEDGWMYALDFPATYSAKKSWNSYVRRRKWVRYRRYAALNSWCAVAPLHKDPTQEPFIDVAIGGTCVPNAPAGTLCVWAITAHGRAMFRTGVSKTAPEGLRWTAVPTPTGSELAQISVGPTGLVWAVLHNGRVIVRTGVTRDNLVGDSWLDVKTPVAASSLRIVHVSVGTDAVWCVTNDHHAWFRRGVKGEAAGISEDSAIGKGWVEMVGNISMVSVAANDQVFAIGAADRCLYHRSGVTSADPTGKKWRLIQCPMQISRTSSSLSIVSRKSGGSSSTPGSKHQSFSNLYSKEKEKGVVETCAVIETVLNSSTGSCSSNGGPPGLLKNERWKLSADSPPTIGSLNLNDRHKQRTAALRETSHASSAPAADVVEVVTGKFETQLRNPRAWSPVRSVGSVVGTEAHPESDSTVFESDSTHHGSDVFLGEDDDHTGSQFWTECGILWSCVASGAVTVDASNMPNWFNEQTSDSKVDVNANWRKDIVNKLQRRQEKLAKLQTVAKFEKAVELSSWVKSADARYQRPGGEFEDCIIELEWVSSGSGTDTNSSENSRSGDSGTFTVLSPDGAATKIQFPLSDITCVQCCSEAGAPRIAIHAPHLPVNCSPVKLQFSSDSEMEDWLSHLSSVCSQINTMVGKPAGNAIWITSELGDVFVFDPANMKAHQTSEPSEGYVEKMDVSTCETPYYNTLYNGMPCGTELEISGCVYDDADQIRFDLQSHSAVKVQPHRVEKHRVIALHLNPRFNERTTVLNSMKESEWLDEIRNDKMAFAPGATFSLKIRALQDHYLIIVNNAVYTDYKYRIDPESVTRLYVSGRIKLFNVLYRCPSLIVSMERMHWRQMGGHIKRIFNSGVDVVWGISCDNTGWVYNGGWGGMFLKGLEGSGKINPMIDTHTYYVYENQRWNPISGFTAKSLPTDRHMWSDATGRQKRSKEHTKLLSTHCEWISDWAIDYNIPGGADKEGWQYAIDFPANYHAHKKLTDCVRRRRWMKRCRLSSSGPWQELSQSKILDAALQVLDEDVDHSCSGERNTAVAAWAIASNGDVLIRHGVCSLNPRGDAWEHITSDQPLVGISVGPTGQVWTVARNGMVFFRYGISRQNPCGDAWQQVEAPAGVTFKAISVGRAGIWALDNQQRLAVRKEISRTFPEGSHWQFLPNAANVPPHTDQHCGFRSVSVGSEVWAISLNGIICRRCGITEENPAGVGWNLGIAGQWQNVSVEGYM</sequence>
<gene>
    <name type="primary">Pex23</name>
    <name type="ORF">CG32226</name>
</gene>
<protein>
    <recommendedName>
        <fullName>Tectonin beta-propeller repeat-containing protein</fullName>
    </recommendedName>
    <alternativeName>
        <fullName>Peroxin-23 protein</fullName>
    </alternativeName>
</protein>
<name>TECPR_DROME</name>
<comment type="function">
    <text evidence="3">Involved in peroxisome biogenesis.</text>
</comment>
<comment type="similarity">
    <text evidence="4">Belongs to the TECPR1 family.</text>
</comment>
<comment type="sequence caution" evidence="4">
    <conflict type="erroneous initiation">
        <sequence resource="EMBL-CDS" id="ACZ54681"/>
    </conflict>
    <text>Extended N-terminus.</text>
</comment>
<accession>Q9VWB0</accession>
<accession>D0Z772</accession>
<keyword id="KW-0430">Lectin</keyword>
<keyword id="KW-0962">Peroxisome biogenesis</keyword>
<keyword id="KW-1185">Reference proteome</keyword>
<keyword id="KW-0677">Repeat</keyword>
<evidence type="ECO:0000255" key="1">
    <source>
        <dbReference type="PROSITE-ProRule" id="PRU00639"/>
    </source>
</evidence>
<evidence type="ECO:0000256" key="2">
    <source>
        <dbReference type="SAM" id="MobiDB-lite"/>
    </source>
</evidence>
<evidence type="ECO:0000269" key="3">
    <source>
    </source>
</evidence>
<evidence type="ECO:0000305" key="4"/>
<reference key="1">
    <citation type="journal article" date="2000" name="Science">
        <title>The genome sequence of Drosophila melanogaster.</title>
        <authorList>
            <person name="Adams M.D."/>
            <person name="Celniker S.E."/>
            <person name="Holt R.A."/>
            <person name="Evans C.A."/>
            <person name="Gocayne J.D."/>
            <person name="Amanatides P.G."/>
            <person name="Scherer S.E."/>
            <person name="Li P.W."/>
            <person name="Hoskins R.A."/>
            <person name="Galle R.F."/>
            <person name="George R.A."/>
            <person name="Lewis S.E."/>
            <person name="Richards S."/>
            <person name="Ashburner M."/>
            <person name="Henderson S.N."/>
            <person name="Sutton G.G."/>
            <person name="Wortman J.R."/>
            <person name="Yandell M.D."/>
            <person name="Zhang Q."/>
            <person name="Chen L.X."/>
            <person name="Brandon R.C."/>
            <person name="Rogers Y.-H.C."/>
            <person name="Blazej R.G."/>
            <person name="Champe M."/>
            <person name="Pfeiffer B.D."/>
            <person name="Wan K.H."/>
            <person name="Doyle C."/>
            <person name="Baxter E.G."/>
            <person name="Helt G."/>
            <person name="Nelson C.R."/>
            <person name="Miklos G.L.G."/>
            <person name="Abril J.F."/>
            <person name="Agbayani A."/>
            <person name="An H.-J."/>
            <person name="Andrews-Pfannkoch C."/>
            <person name="Baldwin D."/>
            <person name="Ballew R.M."/>
            <person name="Basu A."/>
            <person name="Baxendale J."/>
            <person name="Bayraktaroglu L."/>
            <person name="Beasley E.M."/>
            <person name="Beeson K.Y."/>
            <person name="Benos P.V."/>
            <person name="Berman B.P."/>
            <person name="Bhandari D."/>
            <person name="Bolshakov S."/>
            <person name="Borkova D."/>
            <person name="Botchan M.R."/>
            <person name="Bouck J."/>
            <person name="Brokstein P."/>
            <person name="Brottier P."/>
            <person name="Burtis K.C."/>
            <person name="Busam D.A."/>
            <person name="Butler H."/>
            <person name="Cadieu E."/>
            <person name="Center A."/>
            <person name="Chandra I."/>
            <person name="Cherry J.M."/>
            <person name="Cawley S."/>
            <person name="Dahlke C."/>
            <person name="Davenport L.B."/>
            <person name="Davies P."/>
            <person name="de Pablos B."/>
            <person name="Delcher A."/>
            <person name="Deng Z."/>
            <person name="Mays A.D."/>
            <person name="Dew I."/>
            <person name="Dietz S.M."/>
            <person name="Dodson K."/>
            <person name="Doup L.E."/>
            <person name="Downes M."/>
            <person name="Dugan-Rocha S."/>
            <person name="Dunkov B.C."/>
            <person name="Dunn P."/>
            <person name="Durbin K.J."/>
            <person name="Evangelista C.C."/>
            <person name="Ferraz C."/>
            <person name="Ferriera S."/>
            <person name="Fleischmann W."/>
            <person name="Fosler C."/>
            <person name="Gabrielian A.E."/>
            <person name="Garg N.S."/>
            <person name="Gelbart W.M."/>
            <person name="Glasser K."/>
            <person name="Glodek A."/>
            <person name="Gong F."/>
            <person name="Gorrell J.H."/>
            <person name="Gu Z."/>
            <person name="Guan P."/>
            <person name="Harris M."/>
            <person name="Harris N.L."/>
            <person name="Harvey D.A."/>
            <person name="Heiman T.J."/>
            <person name="Hernandez J.R."/>
            <person name="Houck J."/>
            <person name="Hostin D."/>
            <person name="Houston K.A."/>
            <person name="Howland T.J."/>
            <person name="Wei M.-H."/>
            <person name="Ibegwam C."/>
            <person name="Jalali M."/>
            <person name="Kalush F."/>
            <person name="Karpen G.H."/>
            <person name="Ke Z."/>
            <person name="Kennison J.A."/>
            <person name="Ketchum K.A."/>
            <person name="Kimmel B.E."/>
            <person name="Kodira C.D."/>
            <person name="Kraft C.L."/>
            <person name="Kravitz S."/>
            <person name="Kulp D."/>
            <person name="Lai Z."/>
            <person name="Lasko P."/>
            <person name="Lei Y."/>
            <person name="Levitsky A.A."/>
            <person name="Li J.H."/>
            <person name="Li Z."/>
            <person name="Liang Y."/>
            <person name="Lin X."/>
            <person name="Liu X."/>
            <person name="Mattei B."/>
            <person name="McIntosh T.C."/>
            <person name="McLeod M.P."/>
            <person name="McPherson D."/>
            <person name="Merkulov G."/>
            <person name="Milshina N.V."/>
            <person name="Mobarry C."/>
            <person name="Morris J."/>
            <person name="Moshrefi A."/>
            <person name="Mount S.M."/>
            <person name="Moy M."/>
            <person name="Murphy B."/>
            <person name="Murphy L."/>
            <person name="Muzny D.M."/>
            <person name="Nelson D.L."/>
            <person name="Nelson D.R."/>
            <person name="Nelson K.A."/>
            <person name="Nixon K."/>
            <person name="Nusskern D.R."/>
            <person name="Pacleb J.M."/>
            <person name="Palazzolo M."/>
            <person name="Pittman G.S."/>
            <person name="Pan S."/>
            <person name="Pollard J."/>
            <person name="Puri V."/>
            <person name="Reese M.G."/>
            <person name="Reinert K."/>
            <person name="Remington K."/>
            <person name="Saunders R.D.C."/>
            <person name="Scheeler F."/>
            <person name="Shen H."/>
            <person name="Shue B.C."/>
            <person name="Siden-Kiamos I."/>
            <person name="Simpson M."/>
            <person name="Skupski M.P."/>
            <person name="Smith T.J."/>
            <person name="Spier E."/>
            <person name="Spradling A.C."/>
            <person name="Stapleton M."/>
            <person name="Strong R."/>
            <person name="Sun E."/>
            <person name="Svirskas R."/>
            <person name="Tector C."/>
            <person name="Turner R."/>
            <person name="Venter E."/>
            <person name="Wang A.H."/>
            <person name="Wang X."/>
            <person name="Wang Z.-Y."/>
            <person name="Wassarman D.A."/>
            <person name="Weinstock G.M."/>
            <person name="Weissenbach J."/>
            <person name="Williams S.M."/>
            <person name="Woodage T."/>
            <person name="Worley K.C."/>
            <person name="Wu D."/>
            <person name="Yang S."/>
            <person name="Yao Q.A."/>
            <person name="Ye J."/>
            <person name="Yeh R.-F."/>
            <person name="Zaveri J.S."/>
            <person name="Zhan M."/>
            <person name="Zhang G."/>
            <person name="Zhao Q."/>
            <person name="Zheng L."/>
            <person name="Zheng X.H."/>
            <person name="Zhong F.N."/>
            <person name="Zhong W."/>
            <person name="Zhou X."/>
            <person name="Zhu S.C."/>
            <person name="Zhu X."/>
            <person name="Smith H.O."/>
            <person name="Gibbs R.A."/>
            <person name="Myers E.W."/>
            <person name="Rubin G.M."/>
            <person name="Venter J.C."/>
        </authorList>
    </citation>
    <scope>NUCLEOTIDE SEQUENCE [LARGE SCALE GENOMIC DNA]</scope>
    <source>
        <strain>Berkeley</strain>
    </source>
</reference>
<reference key="2">
    <citation type="journal article" date="2002" name="Genome Biol.">
        <title>Annotation of the Drosophila melanogaster euchromatic genome: a systematic review.</title>
        <authorList>
            <person name="Misra S."/>
            <person name="Crosby M.A."/>
            <person name="Mungall C.J."/>
            <person name="Matthews B.B."/>
            <person name="Campbell K.S."/>
            <person name="Hradecky P."/>
            <person name="Huang Y."/>
            <person name="Kaminker J.S."/>
            <person name="Millburn G.H."/>
            <person name="Prochnik S.E."/>
            <person name="Smith C.D."/>
            <person name="Tupy J.L."/>
            <person name="Whitfield E.J."/>
            <person name="Bayraktaroglu L."/>
            <person name="Berman B.P."/>
            <person name="Bettencourt B.R."/>
            <person name="Celniker S.E."/>
            <person name="de Grey A.D.N.J."/>
            <person name="Drysdale R.A."/>
            <person name="Harris N.L."/>
            <person name="Richter J."/>
            <person name="Russo S."/>
            <person name="Schroeder A.J."/>
            <person name="Shu S.Q."/>
            <person name="Stapleton M."/>
            <person name="Yamada C."/>
            <person name="Ashburner M."/>
            <person name="Gelbart W.M."/>
            <person name="Rubin G.M."/>
            <person name="Lewis S.E."/>
        </authorList>
    </citation>
    <scope>GENOME REANNOTATION</scope>
    <source>
        <strain>Berkeley</strain>
    </source>
</reference>
<reference key="3">
    <citation type="submission" date="2009-11" db="EMBL/GenBank/DDBJ databases">
        <authorList>
            <person name="Carlson J."/>
            <person name="Booth B."/>
            <person name="Frise E."/>
            <person name="Park S."/>
            <person name="Wan K."/>
            <person name="Yu C."/>
            <person name="Celniker S."/>
        </authorList>
    </citation>
    <scope>NUCLEOTIDE SEQUENCE [MRNA]</scope>
    <source>
        <strain>Berkeley</strain>
    </source>
</reference>
<reference key="4">
    <citation type="journal article" date="2011" name="Dis. Model. Mech.">
        <title>A Drosophila model for the Zellweger spectrum of peroxisome biogenesis disorders.</title>
        <authorList>
            <person name="Mast F.D."/>
            <person name="Li J."/>
            <person name="Virk M.K."/>
            <person name="Hughes S.C."/>
            <person name="Simmonds A.J."/>
            <person name="Rachubinski R.A."/>
        </authorList>
    </citation>
    <scope>FUNCTION</scope>
</reference>
<feature type="chain" id="PRO_0000337065" description="Tectonin beta-propeller repeat-containing protein">
    <location>
        <begin position="1"/>
        <end position="1350"/>
    </location>
</feature>
<feature type="repeat" description="TECPR 1">
    <location>
        <begin position="23"/>
        <end position="59"/>
    </location>
</feature>
<feature type="repeat" description="TECPR 2">
    <location>
        <begin position="233"/>
        <end position="271"/>
    </location>
</feature>
<feature type="repeat" description="TECPR 3">
    <location>
        <begin position="280"/>
        <end position="320"/>
    </location>
</feature>
<feature type="repeat" description="TECPR 4">
    <location>
        <begin position="336"/>
        <end position="371"/>
    </location>
</feature>
<feature type="domain" description="Galectin" evidence="1">
    <location>
        <begin position="816"/>
        <end position="955"/>
    </location>
</feature>
<feature type="repeat" description="TECPR 5">
    <location>
        <begin position="966"/>
        <end position="1000"/>
    </location>
</feature>
<feature type="repeat" description="TECPR 6">
    <location>
        <begin position="1187"/>
        <end position="1223"/>
    </location>
</feature>
<feature type="repeat" description="TECPR 7">
    <location>
        <begin position="1232"/>
        <end position="1269"/>
    </location>
</feature>
<feature type="repeat" description="TECPR 8">
    <location>
        <begin position="1278"/>
        <end position="1322"/>
    </location>
</feature>
<feature type="region of interest" description="Disordered" evidence="2">
    <location>
        <begin position="396"/>
        <end position="420"/>
    </location>
</feature>
<feature type="region of interest" description="Disordered" evidence="2">
    <location>
        <begin position="671"/>
        <end position="691"/>
    </location>
</feature>
<feature type="compositionally biased region" description="Low complexity" evidence="2">
    <location>
        <begin position="396"/>
        <end position="415"/>
    </location>
</feature>
<organism>
    <name type="scientific">Drosophila melanogaster</name>
    <name type="common">Fruit fly</name>
    <dbReference type="NCBI Taxonomy" id="7227"/>
    <lineage>
        <taxon>Eukaryota</taxon>
        <taxon>Metazoa</taxon>
        <taxon>Ecdysozoa</taxon>
        <taxon>Arthropoda</taxon>
        <taxon>Hexapoda</taxon>
        <taxon>Insecta</taxon>
        <taxon>Pterygota</taxon>
        <taxon>Neoptera</taxon>
        <taxon>Endopterygota</taxon>
        <taxon>Diptera</taxon>
        <taxon>Brachycera</taxon>
        <taxon>Muscomorpha</taxon>
        <taxon>Ephydroidea</taxon>
        <taxon>Drosophilidae</taxon>
        <taxon>Drosophila</taxon>
        <taxon>Sophophora</taxon>
    </lineage>
</organism>
<proteinExistence type="evidence at transcript level"/>